<comment type="function">
    <text evidence="1">Probably functions as a manganese efflux pump.</text>
</comment>
<comment type="subcellular location">
    <subcellularLocation>
        <location evidence="1">Cell inner membrane</location>
        <topology evidence="1">Multi-pass membrane protein</topology>
    </subcellularLocation>
</comment>
<comment type="similarity">
    <text evidence="1">Belongs to the MntP (TC 9.B.29) family.</text>
</comment>
<organism>
    <name type="scientific">Campylobacter jejuni subsp. doylei (strain ATCC BAA-1458 / RM4099 / 269.97)</name>
    <dbReference type="NCBI Taxonomy" id="360109"/>
    <lineage>
        <taxon>Bacteria</taxon>
        <taxon>Pseudomonadati</taxon>
        <taxon>Campylobacterota</taxon>
        <taxon>Epsilonproteobacteria</taxon>
        <taxon>Campylobacterales</taxon>
        <taxon>Campylobacteraceae</taxon>
        <taxon>Campylobacter</taxon>
    </lineage>
</organism>
<sequence length="187" mass="20558">MDFYSLIFLSCALGMDAFAVSLCKSFSVKKLHLKHYLIVGIYFGGFQALMPTIGYFIGITFASFIASIDHWIAFILLSLIGLKMIKESLENENCNSNAKQFGFKTMLALAIATSIDALAVGVSFAFLNVNLLLAIFLIGIITFILCIIALKIGNKFGIYLKNKAELLGGLVLIILGVKILIEHLFFD</sequence>
<proteinExistence type="inferred from homology"/>
<keyword id="KW-0997">Cell inner membrane</keyword>
<keyword id="KW-1003">Cell membrane</keyword>
<keyword id="KW-0406">Ion transport</keyword>
<keyword id="KW-0464">Manganese</keyword>
<keyword id="KW-0472">Membrane</keyword>
<keyword id="KW-0812">Transmembrane</keyword>
<keyword id="KW-1133">Transmembrane helix</keyword>
<keyword id="KW-0813">Transport</keyword>
<evidence type="ECO:0000255" key="1">
    <source>
        <dbReference type="HAMAP-Rule" id="MF_01521"/>
    </source>
</evidence>
<dbReference type="EMBL" id="CP000768">
    <property type="protein sequence ID" value="ABS44749.1"/>
    <property type="molecule type" value="Genomic_DNA"/>
</dbReference>
<dbReference type="SMR" id="A7H1P4"/>
<dbReference type="KEGG" id="cjd:JJD26997_0180"/>
<dbReference type="HOGENOM" id="CLU_096410_3_0_7"/>
<dbReference type="Proteomes" id="UP000002302">
    <property type="component" value="Chromosome"/>
</dbReference>
<dbReference type="GO" id="GO:0005886">
    <property type="term" value="C:plasma membrane"/>
    <property type="evidence" value="ECO:0007669"/>
    <property type="project" value="UniProtKB-SubCell"/>
</dbReference>
<dbReference type="GO" id="GO:0005384">
    <property type="term" value="F:manganese ion transmembrane transporter activity"/>
    <property type="evidence" value="ECO:0007669"/>
    <property type="project" value="UniProtKB-UniRule"/>
</dbReference>
<dbReference type="HAMAP" id="MF_01521">
    <property type="entry name" value="MntP_pump"/>
    <property type="match status" value="1"/>
</dbReference>
<dbReference type="InterPro" id="IPR003810">
    <property type="entry name" value="Mntp/YtaF"/>
</dbReference>
<dbReference type="InterPro" id="IPR022929">
    <property type="entry name" value="Put_MntP"/>
</dbReference>
<dbReference type="PANTHER" id="PTHR35529">
    <property type="entry name" value="MANGANESE EFFLUX PUMP MNTP-RELATED"/>
    <property type="match status" value="1"/>
</dbReference>
<dbReference type="PANTHER" id="PTHR35529:SF1">
    <property type="entry name" value="MANGANESE EFFLUX PUMP MNTP-RELATED"/>
    <property type="match status" value="1"/>
</dbReference>
<dbReference type="Pfam" id="PF02659">
    <property type="entry name" value="Mntp"/>
    <property type="match status" value="1"/>
</dbReference>
<protein>
    <recommendedName>
        <fullName evidence="1">Putative manganese efflux pump MntP</fullName>
    </recommendedName>
</protein>
<feature type="chain" id="PRO_1000068631" description="Putative manganese efflux pump MntP">
    <location>
        <begin position="1"/>
        <end position="187"/>
    </location>
</feature>
<feature type="transmembrane region" description="Helical" evidence="1">
    <location>
        <begin position="3"/>
        <end position="23"/>
    </location>
</feature>
<feature type="transmembrane region" description="Helical" evidence="1">
    <location>
        <begin position="35"/>
        <end position="55"/>
    </location>
</feature>
<feature type="transmembrane region" description="Helical" evidence="1">
    <location>
        <begin position="56"/>
        <end position="76"/>
    </location>
</feature>
<feature type="transmembrane region" description="Helical" evidence="1">
    <location>
        <begin position="107"/>
        <end position="127"/>
    </location>
</feature>
<feature type="transmembrane region" description="Helical" evidence="1">
    <location>
        <begin position="129"/>
        <end position="149"/>
    </location>
</feature>
<feature type="transmembrane region" description="Helical" evidence="1">
    <location>
        <begin position="166"/>
        <end position="186"/>
    </location>
</feature>
<gene>
    <name evidence="1" type="primary">mntP</name>
    <name type="ordered locus">JJD26997_0180</name>
</gene>
<accession>A7H1P4</accession>
<name>MNTP_CAMJD</name>
<reference key="1">
    <citation type="submission" date="2007-07" db="EMBL/GenBank/DDBJ databases">
        <title>Complete genome sequence of Campylobacter jejuni subsp doylei 269.97 isolated from human blood.</title>
        <authorList>
            <person name="Fouts D.E."/>
            <person name="Mongodin E.F."/>
            <person name="Puiu D."/>
            <person name="Sebastian Y."/>
            <person name="Miller W.G."/>
            <person name="Mandrell R.E."/>
            <person name="Lastovica A.J."/>
            <person name="Nelson K.E."/>
        </authorList>
    </citation>
    <scope>NUCLEOTIDE SEQUENCE [LARGE SCALE GENOMIC DNA]</scope>
    <source>
        <strain>ATCC BAA-1458 / RM4099 / 269.97</strain>
    </source>
</reference>